<organism>
    <name type="scientific">Bartonella tribocorum (strain CIP 105476 / IBS 506)</name>
    <dbReference type="NCBI Taxonomy" id="382640"/>
    <lineage>
        <taxon>Bacteria</taxon>
        <taxon>Pseudomonadati</taxon>
        <taxon>Pseudomonadota</taxon>
        <taxon>Alphaproteobacteria</taxon>
        <taxon>Hyphomicrobiales</taxon>
        <taxon>Bartonellaceae</taxon>
        <taxon>Bartonella</taxon>
    </lineage>
</organism>
<gene>
    <name evidence="1" type="primary">rpsU</name>
    <name type="ordered locus">BT_0146</name>
</gene>
<keyword id="KW-0687">Ribonucleoprotein</keyword>
<keyword id="KW-0689">Ribosomal protein</keyword>
<feature type="chain" id="PRO_1000079397" description="Small ribosomal subunit protein bS21">
    <location>
        <begin position="1"/>
        <end position="77"/>
    </location>
</feature>
<sequence>MQVLVRDNNVDQALRALKKKMQREGIFREMKMRSYYEKPSERRAREKAEAIRRTRKLARKRAQREGFVSNGRTIAVK</sequence>
<proteinExistence type="inferred from homology"/>
<reference key="1">
    <citation type="journal article" date="2007" name="Nat. Genet.">
        <title>Genomic analysis of Bartonella identifies type IV secretion systems as host adaptability factors.</title>
        <authorList>
            <person name="Saenz H.L."/>
            <person name="Engel P."/>
            <person name="Stoeckli M.C."/>
            <person name="Lanz C."/>
            <person name="Raddatz G."/>
            <person name="Vayssier-Taussat M."/>
            <person name="Birtles R."/>
            <person name="Schuster S.C."/>
            <person name="Dehio C."/>
        </authorList>
    </citation>
    <scope>NUCLEOTIDE SEQUENCE [LARGE SCALE GENOMIC DNA]</scope>
    <source>
        <strain>CIP 105476 / IBS 506</strain>
    </source>
</reference>
<comment type="similarity">
    <text evidence="1">Belongs to the bacterial ribosomal protein bS21 family.</text>
</comment>
<evidence type="ECO:0000255" key="1">
    <source>
        <dbReference type="HAMAP-Rule" id="MF_00358"/>
    </source>
</evidence>
<evidence type="ECO:0000305" key="2"/>
<dbReference type="EMBL" id="AM260525">
    <property type="protein sequence ID" value="CAK00633.1"/>
    <property type="molecule type" value="Genomic_DNA"/>
</dbReference>
<dbReference type="RefSeq" id="WP_012230480.1">
    <property type="nucleotide sequence ID" value="NC_010161.1"/>
</dbReference>
<dbReference type="SMR" id="A9IM39"/>
<dbReference type="KEGG" id="btr:BT_0146"/>
<dbReference type="eggNOG" id="COG0828">
    <property type="taxonomic scope" value="Bacteria"/>
</dbReference>
<dbReference type="HOGENOM" id="CLU_159258_0_1_5"/>
<dbReference type="Proteomes" id="UP000001592">
    <property type="component" value="Chromosome"/>
</dbReference>
<dbReference type="GO" id="GO:1990904">
    <property type="term" value="C:ribonucleoprotein complex"/>
    <property type="evidence" value="ECO:0007669"/>
    <property type="project" value="UniProtKB-KW"/>
</dbReference>
<dbReference type="GO" id="GO:0005840">
    <property type="term" value="C:ribosome"/>
    <property type="evidence" value="ECO:0007669"/>
    <property type="project" value="UniProtKB-KW"/>
</dbReference>
<dbReference type="GO" id="GO:0003735">
    <property type="term" value="F:structural constituent of ribosome"/>
    <property type="evidence" value="ECO:0007669"/>
    <property type="project" value="InterPro"/>
</dbReference>
<dbReference type="GO" id="GO:0006412">
    <property type="term" value="P:translation"/>
    <property type="evidence" value="ECO:0007669"/>
    <property type="project" value="UniProtKB-UniRule"/>
</dbReference>
<dbReference type="Gene3D" id="1.20.5.1150">
    <property type="entry name" value="Ribosomal protein S8"/>
    <property type="match status" value="1"/>
</dbReference>
<dbReference type="HAMAP" id="MF_00358">
    <property type="entry name" value="Ribosomal_bS21"/>
    <property type="match status" value="1"/>
</dbReference>
<dbReference type="InterPro" id="IPR001911">
    <property type="entry name" value="Ribosomal_bS21"/>
</dbReference>
<dbReference type="InterPro" id="IPR018278">
    <property type="entry name" value="Ribosomal_bS21_CS"/>
</dbReference>
<dbReference type="InterPro" id="IPR038380">
    <property type="entry name" value="Ribosomal_bS21_sf"/>
</dbReference>
<dbReference type="NCBIfam" id="TIGR00030">
    <property type="entry name" value="S21p"/>
    <property type="match status" value="1"/>
</dbReference>
<dbReference type="PANTHER" id="PTHR21109">
    <property type="entry name" value="MITOCHONDRIAL 28S RIBOSOMAL PROTEIN S21"/>
    <property type="match status" value="1"/>
</dbReference>
<dbReference type="PANTHER" id="PTHR21109:SF0">
    <property type="entry name" value="SMALL RIBOSOMAL SUBUNIT PROTEIN BS21M"/>
    <property type="match status" value="1"/>
</dbReference>
<dbReference type="Pfam" id="PF01165">
    <property type="entry name" value="Ribosomal_S21"/>
    <property type="match status" value="1"/>
</dbReference>
<dbReference type="PRINTS" id="PR00976">
    <property type="entry name" value="RIBOSOMALS21"/>
</dbReference>
<dbReference type="PROSITE" id="PS01181">
    <property type="entry name" value="RIBOSOMAL_S21"/>
    <property type="match status" value="1"/>
</dbReference>
<name>RS21_BART1</name>
<accession>A9IM39</accession>
<protein>
    <recommendedName>
        <fullName evidence="1">Small ribosomal subunit protein bS21</fullName>
    </recommendedName>
    <alternativeName>
        <fullName evidence="2">30S ribosomal protein S21</fullName>
    </alternativeName>
</protein>